<protein>
    <recommendedName>
        <fullName evidence="1">Nucleotide-binding protein MXAN_6564</fullName>
    </recommendedName>
</protein>
<name>Y6564_MYXXD</name>
<proteinExistence type="inferred from homology"/>
<evidence type="ECO:0000255" key="1">
    <source>
        <dbReference type="HAMAP-Rule" id="MF_00636"/>
    </source>
</evidence>
<organism>
    <name type="scientific">Myxococcus xanthus (strain DK1622)</name>
    <dbReference type="NCBI Taxonomy" id="246197"/>
    <lineage>
        <taxon>Bacteria</taxon>
        <taxon>Pseudomonadati</taxon>
        <taxon>Myxococcota</taxon>
        <taxon>Myxococcia</taxon>
        <taxon>Myxococcales</taxon>
        <taxon>Cystobacterineae</taxon>
        <taxon>Myxococcaceae</taxon>
        <taxon>Myxococcus</taxon>
    </lineage>
</organism>
<gene>
    <name type="ordered locus">MXAN_6564</name>
</gene>
<feature type="chain" id="PRO_0000258974" description="Nucleotide-binding protein MXAN_6564">
    <location>
        <begin position="1"/>
        <end position="287"/>
    </location>
</feature>
<feature type="binding site" evidence="1">
    <location>
        <begin position="13"/>
        <end position="20"/>
    </location>
    <ligand>
        <name>ATP</name>
        <dbReference type="ChEBI" id="CHEBI:30616"/>
    </ligand>
</feature>
<feature type="binding site" evidence="1">
    <location>
        <begin position="62"/>
        <end position="65"/>
    </location>
    <ligand>
        <name>GTP</name>
        <dbReference type="ChEBI" id="CHEBI:37565"/>
    </ligand>
</feature>
<keyword id="KW-0067">ATP-binding</keyword>
<keyword id="KW-0342">GTP-binding</keyword>
<keyword id="KW-0547">Nucleotide-binding</keyword>
<keyword id="KW-1185">Reference proteome</keyword>
<dbReference type="EMBL" id="CP000113">
    <property type="protein sequence ID" value="ABF87526.1"/>
    <property type="molecule type" value="Genomic_DNA"/>
</dbReference>
<dbReference type="RefSeq" id="WP_011556494.1">
    <property type="nucleotide sequence ID" value="NC_008095.1"/>
</dbReference>
<dbReference type="SMR" id="Q1CY37"/>
<dbReference type="STRING" id="246197.MXAN_6564"/>
<dbReference type="EnsemblBacteria" id="ABF87526">
    <property type="protein sequence ID" value="ABF87526"/>
    <property type="gene ID" value="MXAN_6564"/>
</dbReference>
<dbReference type="GeneID" id="41363769"/>
<dbReference type="KEGG" id="mxa:MXAN_6564"/>
<dbReference type="eggNOG" id="COG1660">
    <property type="taxonomic scope" value="Bacteria"/>
</dbReference>
<dbReference type="HOGENOM" id="CLU_059558_0_0_7"/>
<dbReference type="OrthoDB" id="9784461at2"/>
<dbReference type="Proteomes" id="UP000002402">
    <property type="component" value="Chromosome"/>
</dbReference>
<dbReference type="GO" id="GO:0005524">
    <property type="term" value="F:ATP binding"/>
    <property type="evidence" value="ECO:0007669"/>
    <property type="project" value="UniProtKB-UniRule"/>
</dbReference>
<dbReference type="GO" id="GO:0005525">
    <property type="term" value="F:GTP binding"/>
    <property type="evidence" value="ECO:0007669"/>
    <property type="project" value="UniProtKB-UniRule"/>
</dbReference>
<dbReference type="Gene3D" id="3.40.50.300">
    <property type="entry name" value="P-loop containing nucleotide triphosphate hydrolases"/>
    <property type="match status" value="1"/>
</dbReference>
<dbReference type="HAMAP" id="MF_00636">
    <property type="entry name" value="RapZ_like"/>
    <property type="match status" value="1"/>
</dbReference>
<dbReference type="InterPro" id="IPR027417">
    <property type="entry name" value="P-loop_NTPase"/>
</dbReference>
<dbReference type="InterPro" id="IPR005337">
    <property type="entry name" value="RapZ-like"/>
</dbReference>
<dbReference type="InterPro" id="IPR053930">
    <property type="entry name" value="RapZ-like_N"/>
</dbReference>
<dbReference type="InterPro" id="IPR053931">
    <property type="entry name" value="RapZ_C"/>
</dbReference>
<dbReference type="NCBIfam" id="NF003828">
    <property type="entry name" value="PRK05416.1"/>
    <property type="match status" value="1"/>
</dbReference>
<dbReference type="PANTHER" id="PTHR30448">
    <property type="entry name" value="RNASE ADAPTER PROTEIN RAPZ"/>
    <property type="match status" value="1"/>
</dbReference>
<dbReference type="PANTHER" id="PTHR30448:SF0">
    <property type="entry name" value="RNASE ADAPTER PROTEIN RAPZ"/>
    <property type="match status" value="1"/>
</dbReference>
<dbReference type="Pfam" id="PF22740">
    <property type="entry name" value="PapZ_C"/>
    <property type="match status" value="1"/>
</dbReference>
<dbReference type="Pfam" id="PF03668">
    <property type="entry name" value="RapZ-like_N"/>
    <property type="match status" value="1"/>
</dbReference>
<dbReference type="PIRSF" id="PIRSF005052">
    <property type="entry name" value="P-loopkin"/>
    <property type="match status" value="1"/>
</dbReference>
<dbReference type="SUPFAM" id="SSF52540">
    <property type="entry name" value="P-loop containing nucleoside triphosphate hydrolases"/>
    <property type="match status" value="1"/>
</dbReference>
<reference key="1">
    <citation type="journal article" date="2006" name="Proc. Natl. Acad. Sci. U.S.A.">
        <title>Evolution of sensory complexity recorded in a myxobacterial genome.</title>
        <authorList>
            <person name="Goldman B.S."/>
            <person name="Nierman W.C."/>
            <person name="Kaiser D."/>
            <person name="Slater S.C."/>
            <person name="Durkin A.S."/>
            <person name="Eisen J.A."/>
            <person name="Ronning C.M."/>
            <person name="Barbazuk W.B."/>
            <person name="Blanchard M."/>
            <person name="Field C."/>
            <person name="Halling C."/>
            <person name="Hinkle G."/>
            <person name="Iartchuk O."/>
            <person name="Kim H.S."/>
            <person name="Mackenzie C."/>
            <person name="Madupu R."/>
            <person name="Miller N."/>
            <person name="Shvartsbeyn A."/>
            <person name="Sullivan S.A."/>
            <person name="Vaudin M."/>
            <person name="Wiegand R."/>
            <person name="Kaplan H.B."/>
        </authorList>
    </citation>
    <scope>NUCLEOTIDE SEQUENCE [LARGE SCALE GENOMIC DNA]</scope>
    <source>
        <strain>DK1622</strain>
    </source>
</reference>
<sequence length="287" mass="31975">MTAPAKQIVIITGMSGSGKSTAIRALEDSGFFCIDNLPVLLLPKLTELAGGGHFERMALVVDVREGVFLKDAPRILAEVRRAGHQVEVLFLDASDDSLIRRFSETRRRHPLAPNGTVAEGIKAERQALRDLRELADQVIDSSTLNVHDLKRMVQARFSPEPAAGPSLSIMSFGYRYGVPPQADLVLDVRFLPNPYFVPEMKGLTGKVPKVAAYVLEREETQQFLEKVVDLCRFLFPRYQKEGKAYLTVALGCTGGKHRSVAIAAELTQRLTDEDTRVQLWDRDIEKE</sequence>
<accession>Q1CY37</accession>
<comment type="function">
    <text evidence="1">Displays ATPase and GTPase activities.</text>
</comment>
<comment type="similarity">
    <text evidence="1">Belongs to the RapZ-like family.</text>
</comment>